<keyword id="KW-0963">Cytoplasm</keyword>
<keyword id="KW-0521">NADP</keyword>
<keyword id="KW-0560">Oxidoreductase</keyword>
<keyword id="KW-1185">Reference proteome</keyword>
<protein>
    <recommendedName>
        <fullName evidence="12">Isoepoxydon dehydrogenase patN</fullName>
        <shortName evidence="12">IDH</shortName>
        <ecNumber evidence="11">1.1.1.-</ecNumber>
    </recommendedName>
    <alternativeName>
        <fullName evidence="12">Patulin biosynthesis cluster protein N</fullName>
    </alternativeName>
</protein>
<name>PATN_PENEN</name>
<sequence>MVLTTGLKGAHVLITGGTRGMGEAMVHKFLQEEANVSYCARTVTNTEYDDFYSTLAEGNTARAVGTAFDVASKDSLVKWVESSAERLGRIDVIIANASPMHMEGETEHWESSFAIDVMGFVELVKAATPYLEKSPQASIIVQSSFMGREFYRSPPAAYGPCKAAQLQHVQELSHFLGPKGIRVNAISPGPVLCKGGPWELYSKINPEWVEEQRLKIPLKRLGGPTEVANVAVFLASPLASFVSGTNMLVDGGIHVGTQF</sequence>
<accession>A0A075TRB3</accession>
<comment type="function">
    <text evidence="7 10 11 14">Isoepoxydon dehydrogenase; part of the gene cluster that mediates the biosynthesis of patulin, an acetate-derived tetraketide mycotoxin produced by several fungal species that shows antimicrobial properties against several bacteria (PubMed:25625822, PubMed:30100914, PubMed:30680886). PatN catalyzes the conversion of isoepoxydon into phyllostine (PubMed:30680886). The pathway begins with the synthesis of 6-methylsalicylic acid by the polyketide synthase (PKS) patK via condensation of acetate and malonate units. The 6-methylsalicylic acid decarboxylase patG then catalyzes the decarboxylation of 6-methylsalicylic acid to yield m-cresol (also known as 3-methylphenol). These first reactions occur in the cytosol. The intermediate m-cresol is then transported into the endoplasmic reticulum where the cytochrome P450 monooxygenase patH converts it to m-hydroxybenzyl alcohol, which is further converted to gentisyl alcohol by the cytochrome P450 monooxygenase patI. The oxidoreductases patJ and patO further convert gentisyl alcohol to isoepoxydon in the vacuole. PatN catalyzes then the transformation of isoepoxydon into phyllostine. The cluster protein patF is responsible for the conversion from phyllostine to neopatulin whereas the alcohol dehydrogenase patD converts neopatulin to E-ascladiol. The steps between isoepoxydon and E-ascladiol occur in the cytosol, and E-ascladiol is probably secreted to the extracellular space by one of the cluster-specific transporters patC or patM. Finally, the secreted patulin synthase patE catalyzes the conversion of E-ascladiol to patulin (Probable) (PubMed:30680886).</text>
</comment>
<comment type="catalytic activity">
    <reaction evidence="11">
        <text>isoepoxydon + NADP(+) = phyllostine + NADPH + H(+)</text>
        <dbReference type="Rhea" id="RHEA:62216"/>
        <dbReference type="ChEBI" id="CHEBI:15378"/>
        <dbReference type="ChEBI" id="CHEBI:57783"/>
        <dbReference type="ChEBI" id="CHEBI:58349"/>
        <dbReference type="ChEBI" id="CHEBI:145109"/>
        <dbReference type="ChEBI" id="CHEBI:145110"/>
    </reaction>
    <physiologicalReaction direction="left-to-right" evidence="11">
        <dbReference type="Rhea" id="RHEA:62217"/>
    </physiologicalReaction>
</comment>
<comment type="pathway">
    <text evidence="11">Mycotoxin biosynthesis; patulin biosynthesis.</text>
</comment>
<comment type="subcellular location">
    <subcellularLocation>
        <location evidence="11">Cytoplasm</location>
        <location evidence="11">Cytosol</location>
    </subcellularLocation>
</comment>
<comment type="induction">
    <text evidence="6 7 9 10 11">Expression is correlated with the production of patulin (PubMed:25120234). Expression is positively regulated by the secondary metabolism regulator laeA (PubMed:27528575, PubMed:30100914). Expression is strongly decreased with increased sucrose concentrations. This decrease is lost in the presence of malic acid (PubMed:30100914). Expression is increased with pH changes from 2.5 to 3.5 in the presence of a limiting concentration of sucrose, 50 mM (PubMed:30100914). Natural phenols present in apple fruits such as chlorogenic acid or the flavonoid epicatechin modulate patulin biosynthesis. They increase expression in the absence of sucrose, have little impact in the presence of 15 mM sucrose, and decrease expression in 175 mM sucrose (PubMed:30100914). Expression is positively regulated by the patulin cluster-specific transcription factor patL (PubMed:25625822). Finally, expression is also positively regulated by the velvet family proteins transcription regulators veA, velB, velC, but not vosA (PubMed:30680886).</text>
</comment>
<comment type="disruption phenotype">
    <text evidence="11">Strongly reduces the production of patulin, shows significant slower colony expansion, and leads to the production of a distinct dark-red pigment.</text>
</comment>
<comment type="biotechnology">
    <text evidence="4 5 8">Patulin was originally used as an antibiotic and specifically trialed to be used against the common cold, but it is no longer used for that purpose since it has been shown to induce immunological, neurological and gastrointestinal effects (PubMed:15082620). Genotoxic effects of patulin with dose-dependent increase in DNA strand breaks in brain, liver and kidneys have been detected in mice (PubMed:22222931). However, more recently, it has been proposed that patulin might also have anti-tumor properties (PubMed:26619846).</text>
</comment>
<comment type="similarity">
    <text evidence="13">Belongs to the short-chain dehydrogenases/reductases (SDR) family.</text>
</comment>
<feature type="chain" id="PRO_0000445928" description="Isoepoxydon dehydrogenase patN">
    <location>
        <begin position="1"/>
        <end position="259"/>
    </location>
</feature>
<feature type="active site" description="Proton donor" evidence="2">
    <location>
        <position position="143"/>
    </location>
</feature>
<feature type="active site" description="Proton donor" evidence="2">
    <location>
        <position position="144"/>
    </location>
</feature>
<feature type="active site" description="Proton acceptor" evidence="3">
    <location>
        <position position="158"/>
    </location>
</feature>
<feature type="active site" description="Lowers pKa of active site Tyr" evidence="2">
    <location>
        <position position="162"/>
    </location>
</feature>
<feature type="binding site" evidence="1">
    <location>
        <position position="69"/>
    </location>
    <ligand>
        <name>NADP(+)</name>
        <dbReference type="ChEBI" id="CHEBI:58349"/>
    </ligand>
</feature>
<feature type="binding site" evidence="2">
    <location>
        <position position="96"/>
    </location>
    <ligand>
        <name>NADP(+)</name>
        <dbReference type="ChEBI" id="CHEBI:58349"/>
    </ligand>
</feature>
<feature type="binding site" evidence="1">
    <location>
        <position position="125"/>
    </location>
    <ligand>
        <name>NADP(+)</name>
        <dbReference type="ChEBI" id="CHEBI:58349"/>
    </ligand>
</feature>
<feature type="binding site" evidence="2">
    <location>
        <position position="158"/>
    </location>
    <ligand>
        <name>NADP(+)</name>
        <dbReference type="ChEBI" id="CHEBI:58349"/>
    </ligand>
</feature>
<feature type="binding site" evidence="2">
    <location>
        <position position="162"/>
    </location>
    <ligand>
        <name>NADP(+)</name>
        <dbReference type="ChEBI" id="CHEBI:58349"/>
    </ligand>
</feature>
<feature type="binding site" evidence="2">
    <location>
        <position position="191"/>
    </location>
    <ligand>
        <name>NADP(+)</name>
        <dbReference type="ChEBI" id="CHEBI:58349"/>
    </ligand>
</feature>
<evidence type="ECO:0000250" key="1">
    <source>
        <dbReference type="UniProtKB" id="L0E2Z4"/>
    </source>
</evidence>
<evidence type="ECO:0000250" key="2">
    <source>
        <dbReference type="UniProtKB" id="O93868"/>
    </source>
</evidence>
<evidence type="ECO:0000255" key="3">
    <source>
        <dbReference type="PROSITE-ProRule" id="PRU10001"/>
    </source>
</evidence>
<evidence type="ECO:0000269" key="4">
    <source>
    </source>
</evidence>
<evidence type="ECO:0000269" key="5">
    <source>
    </source>
</evidence>
<evidence type="ECO:0000269" key="6">
    <source>
    </source>
</evidence>
<evidence type="ECO:0000269" key="7">
    <source>
    </source>
</evidence>
<evidence type="ECO:0000269" key="8">
    <source>
    </source>
</evidence>
<evidence type="ECO:0000269" key="9">
    <source>
    </source>
</evidence>
<evidence type="ECO:0000269" key="10">
    <source>
    </source>
</evidence>
<evidence type="ECO:0000269" key="11">
    <source>
    </source>
</evidence>
<evidence type="ECO:0000303" key="12">
    <source>
    </source>
</evidence>
<evidence type="ECO:0000305" key="13"/>
<evidence type="ECO:0000305" key="14">
    <source>
    </source>
</evidence>
<dbReference type="EC" id="1.1.1.-" evidence="11"/>
<dbReference type="EMBL" id="KF899892">
    <property type="protein sequence ID" value="AIG62141.1"/>
    <property type="molecule type" value="Genomic_DNA"/>
</dbReference>
<dbReference type="EMBL" id="JQFZ01000262">
    <property type="protein sequence ID" value="KGO52636.1"/>
    <property type="molecule type" value="Genomic_DNA"/>
</dbReference>
<dbReference type="RefSeq" id="XP_016595366.1">
    <property type="nucleotide sequence ID" value="XM_016745553.1"/>
</dbReference>
<dbReference type="SMR" id="A0A075TRB3"/>
<dbReference type="STRING" id="27334.A0A075TRB3"/>
<dbReference type="GeneID" id="27680973"/>
<dbReference type="VEuPathDB" id="FungiDB:PEXP_094410"/>
<dbReference type="HOGENOM" id="CLU_010194_1_2_1"/>
<dbReference type="OrthoDB" id="47007at2759"/>
<dbReference type="PhylomeDB" id="A0A075TRB3"/>
<dbReference type="UniPathway" id="UPA00918"/>
<dbReference type="PHI-base" id="PHI:3301"/>
<dbReference type="Proteomes" id="UP000030143">
    <property type="component" value="Unassembled WGS sequence"/>
</dbReference>
<dbReference type="GO" id="GO:0005829">
    <property type="term" value="C:cytosol"/>
    <property type="evidence" value="ECO:0000314"/>
    <property type="project" value="GO_Central"/>
</dbReference>
<dbReference type="GO" id="GO:0016491">
    <property type="term" value="F:oxidoreductase activity"/>
    <property type="evidence" value="ECO:0000314"/>
    <property type="project" value="GO_Central"/>
</dbReference>
<dbReference type="GO" id="GO:0016616">
    <property type="term" value="F:oxidoreductase activity, acting on the CH-OH group of donors, NAD or NADP as acceptor"/>
    <property type="evidence" value="ECO:0007669"/>
    <property type="project" value="TreeGrafter"/>
</dbReference>
<dbReference type="GO" id="GO:0016218">
    <property type="term" value="F:polyketide synthase activity"/>
    <property type="evidence" value="ECO:0000314"/>
    <property type="project" value="UniProt"/>
</dbReference>
<dbReference type="GO" id="GO:0048038">
    <property type="term" value="F:quinone binding"/>
    <property type="evidence" value="ECO:0007669"/>
    <property type="project" value="TreeGrafter"/>
</dbReference>
<dbReference type="GO" id="GO:0006633">
    <property type="term" value="P:fatty acid biosynthetic process"/>
    <property type="evidence" value="ECO:0007669"/>
    <property type="project" value="TreeGrafter"/>
</dbReference>
<dbReference type="GO" id="GO:0140723">
    <property type="term" value="P:patulin biosynthetic process"/>
    <property type="evidence" value="ECO:0000314"/>
    <property type="project" value="UniProt"/>
</dbReference>
<dbReference type="CDD" id="cd05233">
    <property type="entry name" value="SDR_c"/>
    <property type="match status" value="1"/>
</dbReference>
<dbReference type="Gene3D" id="3.40.50.720">
    <property type="entry name" value="NAD(P)-binding Rossmann-like Domain"/>
    <property type="match status" value="1"/>
</dbReference>
<dbReference type="InterPro" id="IPR036291">
    <property type="entry name" value="NAD(P)-bd_dom_sf"/>
</dbReference>
<dbReference type="InterPro" id="IPR002347">
    <property type="entry name" value="SDR_fam"/>
</dbReference>
<dbReference type="PANTHER" id="PTHR42760:SF133">
    <property type="entry name" value="3-OXOACYL-[ACYL-CARRIER-PROTEIN] REDUCTASE"/>
    <property type="match status" value="1"/>
</dbReference>
<dbReference type="PANTHER" id="PTHR42760">
    <property type="entry name" value="SHORT-CHAIN DEHYDROGENASES/REDUCTASES FAMILY MEMBER"/>
    <property type="match status" value="1"/>
</dbReference>
<dbReference type="Pfam" id="PF13561">
    <property type="entry name" value="adh_short_C2"/>
    <property type="match status" value="1"/>
</dbReference>
<dbReference type="PRINTS" id="PR00081">
    <property type="entry name" value="GDHRDH"/>
</dbReference>
<dbReference type="SUPFAM" id="SSF51735">
    <property type="entry name" value="NAD(P)-binding Rossmann-fold domains"/>
    <property type="match status" value="1"/>
</dbReference>
<organism>
    <name type="scientific">Penicillium expansum</name>
    <name type="common">Blue mold rot fungus</name>
    <dbReference type="NCBI Taxonomy" id="27334"/>
    <lineage>
        <taxon>Eukaryota</taxon>
        <taxon>Fungi</taxon>
        <taxon>Dikarya</taxon>
        <taxon>Ascomycota</taxon>
        <taxon>Pezizomycotina</taxon>
        <taxon>Eurotiomycetes</taxon>
        <taxon>Eurotiomycetidae</taxon>
        <taxon>Eurotiales</taxon>
        <taxon>Aspergillaceae</taxon>
        <taxon>Penicillium</taxon>
    </lineage>
</organism>
<gene>
    <name evidence="12" type="primary">patN</name>
    <name type="ORF">PEX2_082830</name>
</gene>
<reference key="1">
    <citation type="journal article" date="2014" name="Int. J. Food Microbiol.">
        <title>Sequencing, physical organization and kinetic expression of the patulin biosynthetic gene cluster from Penicillium expansum.</title>
        <authorList>
            <person name="Tannous J."/>
            <person name="El Khoury R."/>
            <person name="Snini S.P."/>
            <person name="Lippi Y."/>
            <person name="El Khoury A."/>
            <person name="Atoui A."/>
            <person name="Lteif R."/>
            <person name="Oswald I.P."/>
            <person name="Puel O."/>
        </authorList>
    </citation>
    <scope>NUCLEOTIDE SEQUENCE [GENOMIC DNA]</scope>
    <scope>IDENTIFICATION</scope>
    <scope>INDUCTION</scope>
    <source>
        <strain>NRRL 35695</strain>
    </source>
</reference>
<reference key="2">
    <citation type="journal article" date="2015" name="Mol. Plant Microbe Interact.">
        <title>Genome, transcriptome, and functional analyses of Penicillium expansum provide new insights into secondary metabolism and pathogenicity.</title>
        <authorList>
            <person name="Ballester A.R."/>
            <person name="Marcet-Houben M."/>
            <person name="Levin E."/>
            <person name="Sela N."/>
            <person name="Selma-Lazaro C."/>
            <person name="Carmona L."/>
            <person name="Wisniewski M."/>
            <person name="Droby S."/>
            <person name="Gonzalez-Candelas L."/>
            <person name="Gabaldon T."/>
        </authorList>
    </citation>
    <scope>NUCLEOTIDE SEQUENCE [LARGE SCALE GENOMIC DNA]</scope>
    <source>
        <strain>MD-8</strain>
    </source>
</reference>
<reference key="3">
    <citation type="journal article" date="2004" name="Int. J. Epidemiol.">
        <title>Clinical trial of patulin in the common cold. 1944.</title>
        <authorList>
            <consortium name="Patulin Clinical Trials Committee, Medical Research Council"/>
        </authorList>
    </citation>
    <scope>BIOTECHNOLOGY</scope>
</reference>
<reference key="4">
    <citation type="journal article" date="2012" name="Food Chem. Toxicol.">
        <title>DNA damage in organs of mice treated acutely with patulin, a known mycotoxin.</title>
        <authorList>
            <person name="de Melo F.T."/>
            <person name="de Oliveira I.M."/>
            <person name="Greggio S."/>
            <person name="Dacosta J.C."/>
            <person name="Guecheva T.N."/>
            <person name="Saffi J."/>
            <person name="Henriques J.A."/>
            <person name="Rosa R.M."/>
        </authorList>
    </citation>
    <scope>BIOTECHNOLOGY</scope>
</reference>
<reference key="5">
    <citation type="journal article" date="2016" name="Tumor Biol.">
        <title>The potential effect of patulin on mice bearing melanoma cells: an anti-tumour or carcinogenic effect?</title>
        <authorList>
            <person name="Boussabbeh M."/>
            <person name="Ben Salem I."/>
            <person name="Rjiba-Touati K."/>
            <person name="Bouyahya C."/>
            <person name="Neffati F."/>
            <person name="Najjar M.F."/>
            <person name="Bacha H."/>
            <person name="Abid-Essefi S."/>
        </authorList>
    </citation>
    <scope>BIOTECHNOLOGY</scope>
</reference>
<reference key="6">
    <citation type="journal article" date="2017" name="Mol. Plant Pathol.">
        <title>LaeA regulation of secondary metabolism modulates virulence in Penicillium expansum and is mediated by sucrose.</title>
        <authorList>
            <person name="Kumar D."/>
            <person name="Barad S."/>
            <person name="Chen Y."/>
            <person name="Luo X."/>
            <person name="Tannous J."/>
            <person name="Dubey A."/>
            <person name="Glam Matana N."/>
            <person name="Tian S."/>
            <person name="Li B."/>
            <person name="Keller N."/>
            <person name="Prusky D."/>
        </authorList>
    </citation>
    <scope>INDUCTION</scope>
</reference>
<reference key="7">
    <citation type="journal article" date="2018" name="Front. Plant Sci.">
        <title>Apple intrinsic factors modulating the global regulator, LaeA, the patulin gene cluster and patulin accumulation during fruit colonization by Penicillium expansum.</title>
        <authorList>
            <person name="Kumar D."/>
            <person name="Tannous J."/>
            <person name="Sionov E."/>
            <person name="Keller N."/>
            <person name="Prusky D."/>
        </authorList>
    </citation>
    <scope>FUNCTION</scope>
    <scope>INDUCTION</scope>
</reference>
<reference key="8">
    <citation type="journal article" date="2015" name="Mol. Plant Microbe Interact.">
        <title>Genomic characterization reveals insights into patulin biosynthesis and pathogenicity in Penicillium species.</title>
        <authorList>
            <person name="Li B."/>
            <person name="Zong Y."/>
            <person name="Du Z."/>
            <person name="Chen Y."/>
            <person name="Zhang Z."/>
            <person name="Qin G."/>
            <person name="Zhao W."/>
            <person name="Tian S."/>
        </authorList>
    </citation>
    <scope>FUNCTION</scope>
    <scope>INDUCTION</scope>
</reference>
<reference key="9">
    <citation type="journal article" date="2019" name="Environ. Microbiol.">
        <title>Dissection of patulin biosynthesis, spatial control and regulation mechanism in Penicillium expansum.</title>
        <authorList>
            <person name="Li B."/>
            <person name="Chen Y."/>
            <person name="Zong Y."/>
            <person name="Shang Y."/>
            <person name="Zhang Z."/>
            <person name="Xu X."/>
            <person name="Wang X."/>
            <person name="Long M."/>
            <person name="Tian S."/>
        </authorList>
    </citation>
    <scope>FUNCTION</scope>
    <scope>DISRUPTION PHENOTYPE</scope>
    <scope>SUBCELLULAR LOCATION</scope>
    <scope>CATALYTIC ACTIVITY</scope>
    <scope>INDUCTION</scope>
    <scope>PATHWAY</scope>
</reference>
<proteinExistence type="evidence at protein level"/>